<organism>
    <name type="scientific">Saccharolobus shibatae (strain ATCC 51178 / DSM 5389 / JCM 8931 / NBRC 15437 / B12)</name>
    <name type="common">Sulfolobus shibatae</name>
    <dbReference type="NCBI Taxonomy" id="523848"/>
    <lineage>
        <taxon>Archaea</taxon>
        <taxon>Thermoproteota</taxon>
        <taxon>Thermoprotei</taxon>
        <taxon>Sulfolobales</taxon>
        <taxon>Sulfolobaceae</taxon>
        <taxon>Saccharolobus</taxon>
    </lineage>
</organism>
<proteinExistence type="evidence at protein level"/>
<sequence>MSAKEKFTSLSPAEFFKRNPELAGFPNPARALYQTVRELIENSLDATDVHGILPNIKITIDLIDDARQIYKVNVVDNGIGIPPQEVPNAFGRVLYSSKYVNRQTRGMYGLGVKAAVLYSQMHQDKPIEIETSPVNSKRIYTFKLKIDINKNEPIIVERGSVENTRGFHGTSVAISIPGDWPKAKSRIYEYIKRTYIITPYAEFIFKDPEGNVTYYPRLTNKIPKPPQEVKPHPYGVDREEIKILINNLKRDYTIKEFLVNEFQSIGDTTADKILELAGLKPNKKVKNLTEEEITRLVETFKKYEDFRSPSADSLSVIGEDLIELGLKKIFNPDFAASITRKPKAYQGHPFIVEAGVAFGGSIPVGEEPIVLRYANKIPLIYDEKSDVIWKVVEELDWKRYGIESDQYQMVVMVHLCSTKIPYKSAGKESIAEVEDIEKEIKNALMEVARKLKQYLSEKRKEQEAKKKLLAYLKYIPEVSRSLATFLASGNKELVSKYQNEISEGLFKLISKKLDLINIEEYRKVYRVDSE</sequence>
<reference key="1">
    <citation type="journal article" date="1997" name="Nature">
        <title>An atypical topoisomerase II from Archaea with implications for meiotic recombination.</title>
        <authorList>
            <person name="Bergerat A."/>
            <person name="de Massy B."/>
            <person name="Gadelle D."/>
            <person name="Varoutas P.-C."/>
            <person name="Nicolas A."/>
            <person name="Forterre P."/>
        </authorList>
    </citation>
    <scope>NUCLEOTIDE SEQUENCE [GENOMIC DNA]</scope>
    <scope>PROTEIN SEQUENCE OF 492-506</scope>
    <source>
        <strain>ATCC 51178 / DSM 5389 / JCM 8931 / NBRC 15437 / B12</strain>
    </source>
</reference>
<reference evidence="9" key="2">
    <citation type="journal article" date="2021" name="Environ. Microbiol.">
        <title>New insights into the diversity and evolution of the archaeal mobilome from three complete genomes of Saccharolobus shibatae.</title>
        <authorList>
            <person name="Medvedeva S."/>
            <person name="Brandt D."/>
            <person name="Cvirkaite-Krupovic V."/>
            <person name="Liu Y."/>
            <person name="Severinov K."/>
            <person name="Ishino S."/>
            <person name="Ishino Y."/>
            <person name="Prangishvili D."/>
            <person name="Kalinowski J."/>
            <person name="Krupovic M."/>
        </authorList>
    </citation>
    <scope>NUCLEOTIDE SEQUENCE [LARGE SCALE GENOMIC DNA]</scope>
    <source>
        <strain>ATCC 51178 / DSM 5389 / JCM 8931 / NBRC 15437 / B12</strain>
    </source>
</reference>
<reference key="3">
    <citation type="journal article" date="1994" name="J. Biol. Chem.">
        <title>Purification of a DNA topoisomerase II from the hyperthermophilic archaeon Sulfolobus shibatae. A thermostable enzyme with both bacterial and eucaryal features.</title>
        <authorList>
            <person name="Bergerat A."/>
            <person name="Gadelle D."/>
            <person name="Forterre P."/>
        </authorList>
    </citation>
    <scope>FUNCTION</scope>
    <scope>BIOPHYSICOCHEMICAL PROPERTIES</scope>
    <scope>ACTIVITY REGULATION</scope>
    <scope>SUBUNIT</scope>
    <source>
        <strain>ATCC 51178 / DSM 5389 / JCM 8931 / NBRC 15437 / B12</strain>
    </source>
</reference>
<reference key="4">
    <citation type="journal article" date="2001" name="J. Biol. Chem.">
        <title>DNA topoisomerase VI generates ATP-dependent double-strand breaks with two-nucleotide overhangs.</title>
        <authorList>
            <person name="Buhler C."/>
            <person name="Lebbink J.H."/>
            <person name="Bocs C."/>
            <person name="Ladenstein R."/>
            <person name="Forterre P."/>
        </authorList>
    </citation>
    <scope>FUNCTION</scope>
    <scope>SUBUNIT</scope>
</reference>
<reference evidence="10 11" key="5">
    <citation type="journal article" date="2003" name="EMBO J.">
        <title>Structure of the topoisomerase VI-B subunit: implications for type II topoisomerase mechanism and evolution.</title>
        <authorList>
            <person name="Corbett K.D."/>
            <person name="Berger J.M."/>
        </authorList>
    </citation>
    <scope>X-RAY CRYSTALLOGRAPHY (2.0 ANGSTROMS) OF 2-470 IN COMPLEX WITH ATP ANALOG</scope>
</reference>
<reference evidence="12 13 14 15" key="6">
    <citation type="journal article" date="2005" name="Structure">
        <title>Structural dissection of ATP turnover in the prototypical GHL ATPase TopoVI.</title>
        <authorList>
            <person name="Corbett K.D."/>
            <person name="Berger J.M."/>
        </authorList>
    </citation>
    <scope>X-RAY CRYSTALLOGRAPHY (2.0 ANGSTROMS) OF 2-470 IN COMPLEXES WITH ATP ANALOGS</scope>
    <scope>SUBUNIT</scope>
</reference>
<reference evidence="16" key="7">
    <citation type="journal article" date="2006" name="Nucleic Acids Res.">
        <title>Structural basis for topoisomerase VI inhibition by the anti-Hsp90 drug radicicol.</title>
        <authorList>
            <person name="Corbett K.D."/>
            <person name="Berger J.M."/>
        </authorList>
    </citation>
    <scope>X-RAY CRYSTALLOGRAPHY (2.0 ANGSTROMS) OF 2-470 IN COMPLEX WITH RADICICOL</scope>
    <scope>CATALYTIC ACTIVITY</scope>
    <scope>SUBUNIT</scope>
    <scope>ACTIVITY REGULATION</scope>
</reference>
<reference evidence="17" key="8">
    <citation type="journal article" date="2008" name="Structure">
        <title>Crystal structure of an intact type II DNA topoisomerase: insights into DNA transfer mechanisms.</title>
        <authorList>
            <person name="Graille M."/>
            <person name="Cladiere L."/>
            <person name="Durand D."/>
            <person name="Lecointe F."/>
            <person name="Gadelle D."/>
            <person name="Quevillon-Cheruel S."/>
            <person name="Vachette P."/>
            <person name="Forterre P."/>
            <person name="van Tilbeurgh H."/>
        </authorList>
    </citation>
    <scope>X-RAY CRYSTALLOGRAPHY (3.56 ANGSTROMS) IN COMPLEX WITH TOP6A AND RADICICOL</scope>
    <scope>SUBUNIT</scope>
</reference>
<protein>
    <recommendedName>
        <fullName evidence="1">Type 2 DNA topoisomerase 6 subunit B</fullName>
        <ecNumber evidence="1 5">5.6.2.2</ecNumber>
    </recommendedName>
    <alternativeName>
        <fullName evidence="1">Type II DNA topoisomerase VI subunit B</fullName>
        <shortName evidence="1">TopoVI-B</shortName>
    </alternativeName>
</protein>
<accession>O05207</accession>
<accession>A0A8F5BQU1</accession>
<name>TOP6B_SACSH</name>
<evidence type="ECO:0000255" key="1">
    <source>
        <dbReference type="HAMAP-Rule" id="MF_00322"/>
    </source>
</evidence>
<evidence type="ECO:0000269" key="2">
    <source>
    </source>
</evidence>
<evidence type="ECO:0000269" key="3">
    <source>
    </source>
</evidence>
<evidence type="ECO:0000269" key="4">
    <source>
    </source>
</evidence>
<evidence type="ECO:0000269" key="5">
    <source>
    </source>
</evidence>
<evidence type="ECO:0000269" key="6">
    <source>
    </source>
</evidence>
<evidence type="ECO:0000269" key="7">
    <source>
    </source>
</evidence>
<evidence type="ECO:0000305" key="8"/>
<evidence type="ECO:0000312" key="9">
    <source>
        <dbReference type="EMBL" id="QXJ29635.1"/>
    </source>
</evidence>
<evidence type="ECO:0007744" key="10">
    <source>
        <dbReference type="PDB" id="1MU5"/>
    </source>
</evidence>
<evidence type="ECO:0007744" key="11">
    <source>
        <dbReference type="PDB" id="1MX0"/>
    </source>
</evidence>
<evidence type="ECO:0007744" key="12">
    <source>
        <dbReference type="PDB" id="1Z59"/>
    </source>
</evidence>
<evidence type="ECO:0007744" key="13">
    <source>
        <dbReference type="PDB" id="1Z5A"/>
    </source>
</evidence>
<evidence type="ECO:0007744" key="14">
    <source>
        <dbReference type="PDB" id="1Z5B"/>
    </source>
</evidence>
<evidence type="ECO:0007744" key="15">
    <source>
        <dbReference type="PDB" id="1Z5C"/>
    </source>
</evidence>
<evidence type="ECO:0007744" key="16">
    <source>
        <dbReference type="PDB" id="2HKJ"/>
    </source>
</evidence>
<evidence type="ECO:0007744" key="17">
    <source>
        <dbReference type="PDB" id="2ZBK"/>
    </source>
</evidence>
<evidence type="ECO:0007829" key="18">
    <source>
        <dbReference type="PDB" id="1MU5"/>
    </source>
</evidence>
<evidence type="ECO:0007829" key="19">
    <source>
        <dbReference type="PDB" id="1Z59"/>
    </source>
</evidence>
<evidence type="ECO:0007829" key="20">
    <source>
        <dbReference type="PDB" id="1Z5B"/>
    </source>
</evidence>
<keyword id="KW-0002">3D-structure</keyword>
<keyword id="KW-0067">ATP-binding</keyword>
<keyword id="KW-0903">Direct protein sequencing</keyword>
<keyword id="KW-0238">DNA-binding</keyword>
<keyword id="KW-0413">Isomerase</keyword>
<keyword id="KW-0547">Nucleotide-binding</keyword>
<keyword id="KW-0799">Topoisomerase</keyword>
<gene>
    <name evidence="1" type="primary">top6B</name>
    <name evidence="9" type="ORF">J5U23_02508</name>
</gene>
<dbReference type="EC" id="5.6.2.2" evidence="1 5"/>
<dbReference type="EMBL" id="Y10582">
    <property type="protein sequence ID" value="CAA71604.1"/>
    <property type="molecule type" value="Genomic_DNA"/>
</dbReference>
<dbReference type="EMBL" id="CP077717">
    <property type="protein sequence ID" value="QXJ29635.1"/>
    <property type="molecule type" value="Genomic_DNA"/>
</dbReference>
<dbReference type="RefSeq" id="WP_218266310.1">
    <property type="nucleotide sequence ID" value="NZ_CP077717.1"/>
</dbReference>
<dbReference type="PDB" id="1MU5">
    <property type="method" value="X-ray"/>
    <property type="resolution" value="2.00 A"/>
    <property type="chains" value="A=2-470"/>
</dbReference>
<dbReference type="PDB" id="1MX0">
    <property type="method" value="X-ray"/>
    <property type="resolution" value="2.30 A"/>
    <property type="chains" value="A/B/C/D/E/F=1-470"/>
</dbReference>
<dbReference type="PDB" id="1Z59">
    <property type="method" value="X-ray"/>
    <property type="resolution" value="2.10 A"/>
    <property type="chains" value="A=2-470"/>
</dbReference>
<dbReference type="PDB" id="1Z5A">
    <property type="method" value="X-ray"/>
    <property type="resolution" value="2.20 A"/>
    <property type="chains" value="A/B=2-470"/>
</dbReference>
<dbReference type="PDB" id="1Z5B">
    <property type="method" value="X-ray"/>
    <property type="resolution" value="2.00 A"/>
    <property type="chains" value="A/B=2-470"/>
</dbReference>
<dbReference type="PDB" id="1Z5C">
    <property type="method" value="X-ray"/>
    <property type="resolution" value="2.20 A"/>
    <property type="chains" value="A/B=2-470"/>
</dbReference>
<dbReference type="PDB" id="2HKJ">
    <property type="method" value="X-ray"/>
    <property type="resolution" value="2.00 A"/>
    <property type="chains" value="A=2-470"/>
</dbReference>
<dbReference type="PDB" id="2ZBK">
    <property type="method" value="X-ray"/>
    <property type="resolution" value="3.56 A"/>
    <property type="chains" value="B/D/F/H=1-530"/>
</dbReference>
<dbReference type="PDBsum" id="1MU5"/>
<dbReference type="PDBsum" id="1MX0"/>
<dbReference type="PDBsum" id="1Z59"/>
<dbReference type="PDBsum" id="1Z5A"/>
<dbReference type="PDBsum" id="1Z5B"/>
<dbReference type="PDBsum" id="1Z5C"/>
<dbReference type="PDBsum" id="2HKJ"/>
<dbReference type="PDBsum" id="2ZBK"/>
<dbReference type="SMR" id="O05207"/>
<dbReference type="DIP" id="DIP-29416N"/>
<dbReference type="IntAct" id="O05207">
    <property type="interactions" value="1"/>
</dbReference>
<dbReference type="GeneID" id="65563985"/>
<dbReference type="KEGG" id="sshi:J5U23_02508"/>
<dbReference type="OrthoDB" id="65493at2157"/>
<dbReference type="BRENDA" id="5.6.2.2">
    <property type="organism ID" value="6162"/>
</dbReference>
<dbReference type="EvolutionaryTrace" id="O05207"/>
<dbReference type="Proteomes" id="UP000694018">
    <property type="component" value="Chromosome"/>
</dbReference>
<dbReference type="GO" id="GO:0009330">
    <property type="term" value="C:DNA topoisomerase type II (double strand cut, ATP-hydrolyzing) complex"/>
    <property type="evidence" value="ECO:0000314"/>
    <property type="project" value="UniProtKB"/>
</dbReference>
<dbReference type="GO" id="GO:0005524">
    <property type="term" value="F:ATP binding"/>
    <property type="evidence" value="ECO:0007669"/>
    <property type="project" value="UniProtKB-UniRule"/>
</dbReference>
<dbReference type="GO" id="GO:0003677">
    <property type="term" value="F:DNA binding"/>
    <property type="evidence" value="ECO:0007669"/>
    <property type="project" value="UniProtKB-UniRule"/>
</dbReference>
<dbReference type="GO" id="GO:0003918">
    <property type="term" value="F:DNA topoisomerase type II (double strand cut, ATP-hydrolyzing) activity"/>
    <property type="evidence" value="ECO:0007669"/>
    <property type="project" value="UniProtKB-UniRule"/>
</dbReference>
<dbReference type="GO" id="GO:0042802">
    <property type="term" value="F:identical protein binding"/>
    <property type="evidence" value="ECO:0000353"/>
    <property type="project" value="IntAct"/>
</dbReference>
<dbReference type="GO" id="GO:0006265">
    <property type="term" value="P:DNA topological change"/>
    <property type="evidence" value="ECO:0007669"/>
    <property type="project" value="UniProtKB-UniRule"/>
</dbReference>
<dbReference type="CDD" id="cd16933">
    <property type="entry name" value="HATPase_TopVIB-like"/>
    <property type="match status" value="1"/>
</dbReference>
<dbReference type="CDD" id="cd00823">
    <property type="entry name" value="TopoIIB_Trans"/>
    <property type="match status" value="1"/>
</dbReference>
<dbReference type="FunFam" id="1.10.8.50:FF:000014">
    <property type="entry name" value="Type 2 DNA topoisomerase 6 subunit B"/>
    <property type="match status" value="1"/>
</dbReference>
<dbReference type="FunFam" id="3.30.230.10:FF:000091">
    <property type="entry name" value="Type 2 DNA topoisomerase 6 subunit B"/>
    <property type="match status" value="1"/>
</dbReference>
<dbReference type="FunFam" id="3.30.565.10:FF:000062">
    <property type="entry name" value="Type 2 DNA topoisomerase 6 subunit B"/>
    <property type="match status" value="1"/>
</dbReference>
<dbReference type="HAMAP" id="MF_00322">
    <property type="entry name" value="Top6B"/>
    <property type="match status" value="1"/>
</dbReference>
<dbReference type="InterPro" id="IPR005734">
    <property type="entry name" value="TopoVI_B"/>
</dbReference>
<dbReference type="InterPro" id="IPR015320">
    <property type="entry name" value="TopoVI_B_transducer"/>
</dbReference>
<dbReference type="NCBIfam" id="NF003218">
    <property type="entry name" value="PRK04184.1"/>
    <property type="match status" value="1"/>
</dbReference>
<dbReference type="NCBIfam" id="TIGR01052">
    <property type="entry name" value="top6b"/>
    <property type="match status" value="1"/>
</dbReference>
<dbReference type="PANTHER" id="PTHR48444">
    <property type="entry name" value="DNA TOPOISOMERASE 6 SUBUNIT B"/>
    <property type="match status" value="1"/>
</dbReference>
<dbReference type="PANTHER" id="PTHR48444:SF1">
    <property type="entry name" value="DNA TOPOISOMERASE 6 SUBUNIT B"/>
    <property type="match status" value="1"/>
</dbReference>
<dbReference type="Pfam" id="PF02518">
    <property type="entry name" value="HATPase_c"/>
    <property type="match status" value="1"/>
</dbReference>
<dbReference type="Pfam" id="PF05833">
    <property type="entry name" value="NFACT_N"/>
    <property type="match status" value="1"/>
</dbReference>
<dbReference type="Pfam" id="PF09239">
    <property type="entry name" value="Topo-VIb_trans"/>
    <property type="match status" value="1"/>
</dbReference>
<dbReference type="SMART" id="SM00387">
    <property type="entry name" value="HATPase_c"/>
    <property type="match status" value="1"/>
</dbReference>
<comment type="function">
    <text evidence="2 7">Relaxes both positive and negative supercoils and exhibits a strong decatenase and unknotting activity; it cannot introduce DNA supercoils (PubMed:7961685). ATP is absolutely required for DNA cleavage; the nonhydrolyzable analog AMP-PNP generates nicked or linear products from a supercoiled dsDNA substrate. Generates staggered two-nucleotide long 5' overhangs. The enzyme is covalently attached transiently to the 5'-ends of the cleaved strands (PubMed:11485995).</text>
</comment>
<comment type="catalytic activity">
    <reaction evidence="1 5">
        <text>ATP-dependent breakage, passage and rejoining of double-stranded DNA.</text>
        <dbReference type="EC" id="5.6.2.2"/>
    </reaction>
</comment>
<comment type="activity regulation">
    <text evidence="5 7">Not inhibited by the DNA gyrase inhibitor novobiocin, instead inhibited by eukaryotic topoisomerase inhibitors such as m- and o-amsacrine, ellipticine, and the quinolone CP-115,953 (PubMed:7961685). Radicicol inhibits the ATPase activity (PubMed:16920739).</text>
</comment>
<comment type="biophysicochemical properties">
    <temperatureDependence>
        <text evidence="7">Optimum temperature is 70-80 degrees Celsius.</text>
    </temperatureDependence>
</comment>
<comment type="subunit">
    <text evidence="1 2 3 4 5 6 7">Homodimer. Heterotetramer of two Top6A and two Top6B chains.</text>
</comment>
<comment type="interaction">
    <interactant intactId="EBI-9026762">
        <id>O05207</id>
    </interactant>
    <interactant intactId="EBI-6430603">
        <id>O05208</id>
        <label>top6A</label>
    </interactant>
    <organismsDiffer>false</organismsDiffer>
    <experiments>5</experiments>
</comment>
<comment type="interaction">
    <interactant intactId="EBI-9026762">
        <id>O05207</id>
    </interactant>
    <interactant intactId="EBI-9026762">
        <id>O05207</id>
        <label>top6B</label>
    </interactant>
    <organismsDiffer>false</organismsDiffer>
    <experiments>3</experiments>
</comment>
<comment type="similarity">
    <text evidence="1">Belongs to the TOP6B family.</text>
</comment>
<feature type="chain" id="PRO_0000145470" description="Type 2 DNA topoisomerase 6 subunit B">
    <location>
        <begin position="1"/>
        <end position="530"/>
    </location>
</feature>
<feature type="binding site" evidence="3 4 11 12 13 14 15">
    <location>
        <position position="42"/>
    </location>
    <ligand>
        <name>ATP</name>
        <dbReference type="ChEBI" id="CHEBI:30616"/>
    </ligand>
</feature>
<feature type="binding site" evidence="3 4 11 12 13 14 15">
    <location>
        <position position="76"/>
    </location>
    <ligand>
        <name>ATP</name>
        <dbReference type="ChEBI" id="CHEBI:30616"/>
    </ligand>
</feature>
<feature type="binding site" evidence="3 4 11 13 14 15">
    <location>
        <begin position="96"/>
        <end position="98"/>
    </location>
    <ligand>
        <name>ATP</name>
        <dbReference type="ChEBI" id="CHEBI:30616"/>
    </ligand>
</feature>
<feature type="binding site" evidence="3 4 11 12 13 14 15">
    <location>
        <begin position="107"/>
        <end position="113"/>
    </location>
    <ligand>
        <name>ATP</name>
        <dbReference type="ChEBI" id="CHEBI:30616"/>
    </ligand>
</feature>
<feature type="binding site" evidence="3 11">
    <location>
        <position position="427"/>
    </location>
    <ligand>
        <name>ATP</name>
        <dbReference type="ChEBI" id="CHEBI:30616"/>
    </ligand>
</feature>
<feature type="sequence conflict" description="In Ref. 1; CAA71604." evidence="8" ref="1">
    <original>Y</original>
    <variation>D</variation>
    <location>
        <position position="303"/>
    </location>
</feature>
<feature type="sequence conflict" description="In Ref. 1; CAA71604." evidence="8" ref="1">
    <original>D</original>
    <variation>N</variation>
    <location>
        <position position="435"/>
    </location>
</feature>
<feature type="helix" evidence="18">
    <location>
        <begin position="12"/>
        <end position="18"/>
    </location>
</feature>
<feature type="helix" evidence="18">
    <location>
        <begin position="20"/>
        <end position="22"/>
    </location>
</feature>
<feature type="helix" evidence="18">
    <location>
        <begin position="28"/>
        <end position="45"/>
    </location>
</feature>
<feature type="helix" evidence="18">
    <location>
        <begin position="48"/>
        <end position="50"/>
    </location>
</feature>
<feature type="strand" evidence="18">
    <location>
        <begin position="55"/>
        <end position="64"/>
    </location>
</feature>
<feature type="turn" evidence="18">
    <location>
        <begin position="65"/>
        <end position="68"/>
    </location>
</feature>
<feature type="strand" evidence="18">
    <location>
        <begin position="69"/>
        <end position="75"/>
    </location>
</feature>
<feature type="helix" evidence="18">
    <location>
        <begin position="83"/>
        <end position="85"/>
    </location>
</feature>
<feature type="helix" evidence="18">
    <location>
        <begin position="86"/>
        <end position="91"/>
    </location>
</feature>
<feature type="strand" evidence="20">
    <location>
        <begin position="92"/>
        <end position="97"/>
    </location>
</feature>
<feature type="strand" evidence="20">
    <location>
        <begin position="100"/>
        <end position="102"/>
    </location>
</feature>
<feature type="turn" evidence="18">
    <location>
        <begin position="109"/>
        <end position="111"/>
    </location>
</feature>
<feature type="helix" evidence="18">
    <location>
        <begin position="112"/>
        <end position="122"/>
    </location>
</feature>
<feature type="strand" evidence="18">
    <location>
        <begin position="127"/>
        <end position="132"/>
    </location>
</feature>
<feature type="strand" evidence="18">
    <location>
        <begin position="137"/>
        <end position="146"/>
    </location>
</feature>
<feature type="turn" evidence="18">
    <location>
        <begin position="148"/>
        <end position="150"/>
    </location>
</feature>
<feature type="strand" evidence="18">
    <location>
        <begin position="153"/>
        <end position="162"/>
    </location>
</feature>
<feature type="strand" evidence="18">
    <location>
        <begin position="169"/>
        <end position="177"/>
    </location>
</feature>
<feature type="helix" evidence="18">
    <location>
        <begin position="180"/>
        <end position="197"/>
    </location>
</feature>
<feature type="strand" evidence="18">
    <location>
        <begin position="202"/>
        <end position="206"/>
    </location>
</feature>
<feature type="strand" evidence="18">
    <location>
        <begin position="212"/>
        <end position="215"/>
    </location>
</feature>
<feature type="helix" evidence="18">
    <location>
        <begin position="233"/>
        <end position="235"/>
    </location>
</feature>
<feature type="helix" evidence="18">
    <location>
        <begin position="238"/>
        <end position="244"/>
    </location>
</feature>
<feature type="helix" evidence="18">
    <location>
        <begin position="254"/>
        <end position="258"/>
    </location>
</feature>
<feature type="strand" evidence="18">
    <location>
        <begin position="261"/>
        <end position="264"/>
    </location>
</feature>
<feature type="helix" evidence="18">
    <location>
        <begin position="267"/>
        <end position="276"/>
    </location>
</feature>
<feature type="helix" evidence="18">
    <location>
        <begin position="285"/>
        <end position="287"/>
    </location>
</feature>
<feature type="helix" evidence="18">
    <location>
        <begin position="292"/>
        <end position="302"/>
    </location>
</feature>
<feature type="helix" evidence="20">
    <location>
        <begin position="311"/>
        <end position="313"/>
    </location>
</feature>
<feature type="helix" evidence="18">
    <location>
        <begin position="319"/>
        <end position="330"/>
    </location>
</feature>
<feature type="strand" evidence="18">
    <location>
        <begin position="333"/>
        <end position="339"/>
    </location>
</feature>
<feature type="strand" evidence="18">
    <location>
        <begin position="343"/>
        <end position="345"/>
    </location>
</feature>
<feature type="strand" evidence="18">
    <location>
        <begin position="348"/>
        <end position="359"/>
    </location>
</feature>
<feature type="strand" evidence="18">
    <location>
        <begin position="365"/>
        <end position="367"/>
    </location>
</feature>
<feature type="strand" evidence="18">
    <location>
        <begin position="369"/>
        <end position="374"/>
    </location>
</feature>
<feature type="strand" evidence="18">
    <location>
        <begin position="377"/>
        <end position="379"/>
    </location>
</feature>
<feature type="helix" evidence="18">
    <location>
        <begin position="383"/>
        <end position="385"/>
    </location>
</feature>
<feature type="helix" evidence="18">
    <location>
        <begin position="387"/>
        <end position="394"/>
    </location>
</feature>
<feature type="helix" evidence="18">
    <location>
        <begin position="397"/>
        <end position="400"/>
    </location>
</feature>
<feature type="strand" evidence="19">
    <location>
        <begin position="404"/>
        <end position="407"/>
    </location>
</feature>
<feature type="strand" evidence="18">
    <location>
        <begin position="409"/>
        <end position="419"/>
    </location>
</feature>
<feature type="strand" evidence="18">
    <location>
        <begin position="422"/>
        <end position="424"/>
    </location>
</feature>
<feature type="strand" evidence="20">
    <location>
        <begin position="428"/>
        <end position="430"/>
    </location>
</feature>
<feature type="helix" evidence="18">
    <location>
        <begin position="434"/>
        <end position="468"/>
    </location>
</feature>